<evidence type="ECO:0000255" key="1">
    <source>
        <dbReference type="HAMAP-Rule" id="MF_01302"/>
    </source>
</evidence>
<evidence type="ECO:0000305" key="2"/>
<name>RS8_SYNFM</name>
<dbReference type="EMBL" id="CP000478">
    <property type="protein sequence ID" value="ABK17256.1"/>
    <property type="molecule type" value="Genomic_DNA"/>
</dbReference>
<dbReference type="RefSeq" id="WP_011698426.1">
    <property type="nucleotide sequence ID" value="NC_008554.1"/>
</dbReference>
<dbReference type="SMR" id="A0LIK4"/>
<dbReference type="FunCoup" id="A0LIK4">
    <property type="interactions" value="539"/>
</dbReference>
<dbReference type="STRING" id="335543.Sfum_1569"/>
<dbReference type="KEGG" id="sfu:Sfum_1569"/>
<dbReference type="eggNOG" id="COG0096">
    <property type="taxonomic scope" value="Bacteria"/>
</dbReference>
<dbReference type="HOGENOM" id="CLU_098428_0_2_7"/>
<dbReference type="InParanoid" id="A0LIK4"/>
<dbReference type="OrthoDB" id="9802617at2"/>
<dbReference type="Proteomes" id="UP000001784">
    <property type="component" value="Chromosome"/>
</dbReference>
<dbReference type="GO" id="GO:1990904">
    <property type="term" value="C:ribonucleoprotein complex"/>
    <property type="evidence" value="ECO:0007669"/>
    <property type="project" value="UniProtKB-KW"/>
</dbReference>
<dbReference type="GO" id="GO:0005840">
    <property type="term" value="C:ribosome"/>
    <property type="evidence" value="ECO:0007669"/>
    <property type="project" value="UniProtKB-KW"/>
</dbReference>
<dbReference type="GO" id="GO:0019843">
    <property type="term" value="F:rRNA binding"/>
    <property type="evidence" value="ECO:0007669"/>
    <property type="project" value="UniProtKB-UniRule"/>
</dbReference>
<dbReference type="GO" id="GO:0003735">
    <property type="term" value="F:structural constituent of ribosome"/>
    <property type="evidence" value="ECO:0007669"/>
    <property type="project" value="InterPro"/>
</dbReference>
<dbReference type="GO" id="GO:0006412">
    <property type="term" value="P:translation"/>
    <property type="evidence" value="ECO:0007669"/>
    <property type="project" value="UniProtKB-UniRule"/>
</dbReference>
<dbReference type="FunFam" id="3.30.1370.30:FF:000002">
    <property type="entry name" value="30S ribosomal protein S8"/>
    <property type="match status" value="1"/>
</dbReference>
<dbReference type="FunFam" id="3.30.1490.10:FF:000001">
    <property type="entry name" value="30S ribosomal protein S8"/>
    <property type="match status" value="1"/>
</dbReference>
<dbReference type="Gene3D" id="3.30.1370.30">
    <property type="match status" value="1"/>
</dbReference>
<dbReference type="Gene3D" id="3.30.1490.10">
    <property type="match status" value="1"/>
</dbReference>
<dbReference type="HAMAP" id="MF_01302_B">
    <property type="entry name" value="Ribosomal_uS8_B"/>
    <property type="match status" value="1"/>
</dbReference>
<dbReference type="InterPro" id="IPR000630">
    <property type="entry name" value="Ribosomal_uS8"/>
</dbReference>
<dbReference type="InterPro" id="IPR047863">
    <property type="entry name" value="Ribosomal_uS8_CS"/>
</dbReference>
<dbReference type="InterPro" id="IPR035987">
    <property type="entry name" value="Ribosomal_uS8_sf"/>
</dbReference>
<dbReference type="NCBIfam" id="NF001109">
    <property type="entry name" value="PRK00136.1"/>
    <property type="match status" value="1"/>
</dbReference>
<dbReference type="PANTHER" id="PTHR11758">
    <property type="entry name" value="40S RIBOSOMAL PROTEIN S15A"/>
    <property type="match status" value="1"/>
</dbReference>
<dbReference type="Pfam" id="PF00410">
    <property type="entry name" value="Ribosomal_S8"/>
    <property type="match status" value="1"/>
</dbReference>
<dbReference type="SUPFAM" id="SSF56047">
    <property type="entry name" value="Ribosomal protein S8"/>
    <property type="match status" value="1"/>
</dbReference>
<dbReference type="PROSITE" id="PS00053">
    <property type="entry name" value="RIBOSOMAL_S8"/>
    <property type="match status" value="1"/>
</dbReference>
<organism>
    <name type="scientific">Syntrophobacter fumaroxidans (strain DSM 10017 / MPOB)</name>
    <dbReference type="NCBI Taxonomy" id="335543"/>
    <lineage>
        <taxon>Bacteria</taxon>
        <taxon>Pseudomonadati</taxon>
        <taxon>Thermodesulfobacteriota</taxon>
        <taxon>Syntrophobacteria</taxon>
        <taxon>Syntrophobacterales</taxon>
        <taxon>Syntrophobacteraceae</taxon>
        <taxon>Syntrophobacter</taxon>
    </lineage>
</organism>
<comment type="function">
    <text evidence="1">One of the primary rRNA binding proteins, it binds directly to 16S rRNA central domain where it helps coordinate assembly of the platform of the 30S subunit.</text>
</comment>
<comment type="subunit">
    <text evidence="1">Part of the 30S ribosomal subunit. Contacts proteins S5 and S12.</text>
</comment>
<comment type="similarity">
    <text evidence="1">Belongs to the universal ribosomal protein uS8 family.</text>
</comment>
<reference key="1">
    <citation type="submission" date="2006-10" db="EMBL/GenBank/DDBJ databases">
        <title>Complete sequence of Syntrophobacter fumaroxidans MPOB.</title>
        <authorList>
            <consortium name="US DOE Joint Genome Institute"/>
            <person name="Copeland A."/>
            <person name="Lucas S."/>
            <person name="Lapidus A."/>
            <person name="Barry K."/>
            <person name="Detter J.C."/>
            <person name="Glavina del Rio T."/>
            <person name="Hammon N."/>
            <person name="Israni S."/>
            <person name="Pitluck S."/>
            <person name="Goltsman E.G."/>
            <person name="Martinez M."/>
            <person name="Schmutz J."/>
            <person name="Larimer F."/>
            <person name="Land M."/>
            <person name="Hauser L."/>
            <person name="Kyrpides N."/>
            <person name="Kim E."/>
            <person name="Boone D.R."/>
            <person name="Brockman F."/>
            <person name="Culley D."/>
            <person name="Ferry J."/>
            <person name="Gunsalus R."/>
            <person name="McInerney M.J."/>
            <person name="Morrison M."/>
            <person name="Plugge C."/>
            <person name="Rohlin L."/>
            <person name="Scholten J."/>
            <person name="Sieber J."/>
            <person name="Stams A.J.M."/>
            <person name="Worm P."/>
            <person name="Henstra A.M."/>
            <person name="Richardson P."/>
        </authorList>
    </citation>
    <scope>NUCLEOTIDE SEQUENCE [LARGE SCALE GENOMIC DNA]</scope>
    <source>
        <strain>DSM 10017 / MPOB</strain>
    </source>
</reference>
<gene>
    <name evidence="1" type="primary">rpsH</name>
    <name type="ordered locus">Sfum_1569</name>
</gene>
<accession>A0LIK4</accession>
<feature type="chain" id="PRO_0000290954" description="Small ribosomal subunit protein uS8">
    <location>
        <begin position="1"/>
        <end position="132"/>
    </location>
</feature>
<protein>
    <recommendedName>
        <fullName evidence="1">Small ribosomal subunit protein uS8</fullName>
    </recommendedName>
    <alternativeName>
        <fullName evidence="2">30S ribosomal protein S8</fullName>
    </alternativeName>
</protein>
<proteinExistence type="inferred from homology"/>
<keyword id="KW-1185">Reference proteome</keyword>
<keyword id="KW-0687">Ribonucleoprotein</keyword>
<keyword id="KW-0689">Ribosomal protein</keyword>
<keyword id="KW-0694">RNA-binding</keyword>
<keyword id="KW-0699">rRNA-binding</keyword>
<sequence length="132" mass="14743">MAVSDPIADFLNRIKNGQKARFDKVDIPASRMKASLSRILKEEGYIKNFKLIKDDKQGIIRVQIKYGEHREGAITGIKRVSRPGCRVYVGHDEIPRVMNGMGIGIVSTSKGIMTDRQARKEGIGGELLCSIW</sequence>